<dbReference type="EMBL" id="AAFI02000011">
    <property type="protein sequence ID" value="EAL70422.1"/>
    <property type="molecule type" value="Genomic_DNA"/>
</dbReference>
<dbReference type="EMBL" id="AAFI02000009">
    <property type="protein sequence ID" value="EAL70932.1"/>
    <property type="molecule type" value="Genomic_DNA"/>
</dbReference>
<dbReference type="RefSeq" id="XP_644347.1">
    <property type="nucleotide sequence ID" value="XM_639255.1"/>
</dbReference>
<dbReference type="RefSeq" id="XP_645067.1">
    <property type="nucleotide sequence ID" value="XM_639975.1"/>
</dbReference>
<dbReference type="SMR" id="Q556L1"/>
<dbReference type="FunCoup" id="Q556L1">
    <property type="interactions" value="262"/>
</dbReference>
<dbReference type="STRING" id="44689.Q556L1"/>
<dbReference type="PaxDb" id="44689-DDB0232380"/>
<dbReference type="EnsemblProtists" id="EAL70422">
    <property type="protein sequence ID" value="EAL70422"/>
    <property type="gene ID" value="DDB_G0273977"/>
</dbReference>
<dbReference type="EnsemblProtists" id="EAL70932">
    <property type="protein sequence ID" value="EAL70932"/>
    <property type="gene ID" value="DDB_G0272590"/>
</dbReference>
<dbReference type="GeneID" id="8618742"/>
<dbReference type="GeneID" id="8619234"/>
<dbReference type="KEGG" id="ddi:DDB_G0272590"/>
<dbReference type="KEGG" id="ddi:DDB_G0273977"/>
<dbReference type="dictyBase" id="DDB_G0272590">
    <property type="gene designation" value="srp14-1"/>
</dbReference>
<dbReference type="dictyBase" id="DDB_G0273977">
    <property type="gene designation" value="srp14-2"/>
</dbReference>
<dbReference type="VEuPathDB" id="AmoebaDB:DDB_G0273977"/>
<dbReference type="eggNOG" id="KOG1761">
    <property type="taxonomic scope" value="Eukaryota"/>
</dbReference>
<dbReference type="HOGENOM" id="CLU_094309_2_1_1"/>
<dbReference type="InParanoid" id="Q556L1"/>
<dbReference type="OMA" id="TNCPEAQ"/>
<dbReference type="PhylomeDB" id="Q556L1"/>
<dbReference type="Reactome" id="R-DDI-1799339">
    <property type="pathway name" value="SRP-dependent cotranslational protein targeting to membrane"/>
</dbReference>
<dbReference type="Reactome" id="R-DDI-6798695">
    <property type="pathway name" value="Neutrophil degranulation"/>
</dbReference>
<dbReference type="PRO" id="PR:Q556L1"/>
<dbReference type="Proteomes" id="UP000002195">
    <property type="component" value="Chromosome 2"/>
</dbReference>
<dbReference type="GO" id="GO:0005786">
    <property type="term" value="C:signal recognition particle, endoplasmic reticulum targeting"/>
    <property type="evidence" value="ECO:0000318"/>
    <property type="project" value="GO_Central"/>
</dbReference>
<dbReference type="GO" id="GO:0008312">
    <property type="term" value="F:7S RNA binding"/>
    <property type="evidence" value="ECO:0007669"/>
    <property type="project" value="InterPro"/>
</dbReference>
<dbReference type="GO" id="GO:0030942">
    <property type="term" value="F:endoplasmic reticulum signal peptide binding"/>
    <property type="evidence" value="ECO:0007669"/>
    <property type="project" value="InterPro"/>
</dbReference>
<dbReference type="GO" id="GO:0045047">
    <property type="term" value="P:protein targeting to ER"/>
    <property type="evidence" value="ECO:0000318"/>
    <property type="project" value="GO_Central"/>
</dbReference>
<dbReference type="GO" id="GO:0006614">
    <property type="term" value="P:SRP-dependent cotranslational protein targeting to membrane"/>
    <property type="evidence" value="ECO:0007669"/>
    <property type="project" value="InterPro"/>
</dbReference>
<dbReference type="FunFam" id="3.30.720.10:FF:000003">
    <property type="entry name" value="Signal recognition particle 14"/>
    <property type="match status" value="1"/>
</dbReference>
<dbReference type="Gene3D" id="3.30.720.10">
    <property type="entry name" value="Signal recognition particle alu RNA binding heterodimer, srp9/1"/>
    <property type="match status" value="1"/>
</dbReference>
<dbReference type="InterPro" id="IPR003210">
    <property type="entry name" value="Signal_recog_particle_SRP14"/>
</dbReference>
<dbReference type="InterPro" id="IPR009018">
    <property type="entry name" value="Signal_recog_particle_SRP9/14"/>
</dbReference>
<dbReference type="PANTHER" id="PTHR12013">
    <property type="entry name" value="SIGNAL RECOGNITION PARTICLE 14 KD PROTEIN"/>
    <property type="match status" value="1"/>
</dbReference>
<dbReference type="Pfam" id="PF02290">
    <property type="entry name" value="SRP14"/>
    <property type="match status" value="1"/>
</dbReference>
<dbReference type="SUPFAM" id="SSF54762">
    <property type="entry name" value="Signal recognition particle alu RNA binding heterodimer, SRP9/14"/>
    <property type="match status" value="1"/>
</dbReference>
<name>SRP14_DICDI</name>
<keyword id="KW-0963">Cytoplasm</keyword>
<keyword id="KW-1185">Reference proteome</keyword>
<keyword id="KW-0687">Ribonucleoprotein</keyword>
<keyword id="KW-0694">RNA-binding</keyword>
<keyword id="KW-0733">Signal recognition particle</keyword>
<feature type="chain" id="PRO_0000312430" description="Signal recognition particle 14 kDa protein">
    <location>
        <begin position="1"/>
        <end position="123"/>
    </location>
</feature>
<feature type="region of interest" description="Disordered" evidence="4">
    <location>
        <begin position="99"/>
        <end position="123"/>
    </location>
</feature>
<feature type="compositionally biased region" description="Low complexity" evidence="4">
    <location>
        <begin position="103"/>
        <end position="116"/>
    </location>
</feature>
<organism>
    <name type="scientific">Dictyostelium discoideum</name>
    <name type="common">Social amoeba</name>
    <dbReference type="NCBI Taxonomy" id="44689"/>
    <lineage>
        <taxon>Eukaryota</taxon>
        <taxon>Amoebozoa</taxon>
        <taxon>Evosea</taxon>
        <taxon>Eumycetozoa</taxon>
        <taxon>Dictyostelia</taxon>
        <taxon>Dictyosteliales</taxon>
        <taxon>Dictyosteliaceae</taxon>
        <taxon>Dictyostelium</taxon>
    </lineage>
</organism>
<evidence type="ECO:0000250" key="1"/>
<evidence type="ECO:0000250" key="2">
    <source>
        <dbReference type="UniProtKB" id="P16255"/>
    </source>
</evidence>
<evidence type="ECO:0000250" key="3">
    <source>
        <dbReference type="UniProtKB" id="P37108"/>
    </source>
</evidence>
<evidence type="ECO:0000256" key="4">
    <source>
        <dbReference type="SAM" id="MobiDB-lite"/>
    </source>
</evidence>
<evidence type="ECO:0000305" key="5"/>
<gene>
    <name type="primary">srp14-1</name>
    <name type="ORF">DDB_G0272590</name>
</gene>
<gene>
    <name type="primary">srp14-2</name>
    <name type="ORF">DDB_G0273977</name>
</gene>
<reference key="1">
    <citation type="journal article" date="2002" name="Nature">
        <title>Sequence and analysis of chromosome 2 of Dictyostelium discoideum.</title>
        <authorList>
            <person name="Gloeckner G."/>
            <person name="Eichinger L."/>
            <person name="Szafranski K."/>
            <person name="Pachebat J.A."/>
            <person name="Bankier A.T."/>
            <person name="Dear P.H."/>
            <person name="Lehmann R."/>
            <person name="Baumgart C."/>
            <person name="Parra G."/>
            <person name="Abril J.F."/>
            <person name="Guigo R."/>
            <person name="Kumpf K."/>
            <person name="Tunggal B."/>
            <person name="Cox E.C."/>
            <person name="Quail M.A."/>
            <person name="Platzer M."/>
            <person name="Rosenthal A."/>
            <person name="Noegel A.A."/>
        </authorList>
    </citation>
    <scope>NUCLEOTIDE SEQUENCE [LARGE SCALE GENOMIC DNA]</scope>
    <source>
        <strain>AX4</strain>
    </source>
</reference>
<reference key="2">
    <citation type="journal article" date="2005" name="Nature">
        <title>The genome of the social amoeba Dictyostelium discoideum.</title>
        <authorList>
            <person name="Eichinger L."/>
            <person name="Pachebat J.A."/>
            <person name="Gloeckner G."/>
            <person name="Rajandream M.A."/>
            <person name="Sucgang R."/>
            <person name="Berriman M."/>
            <person name="Song J."/>
            <person name="Olsen R."/>
            <person name="Szafranski K."/>
            <person name="Xu Q."/>
            <person name="Tunggal B."/>
            <person name="Kummerfeld S."/>
            <person name="Madera M."/>
            <person name="Konfortov B.A."/>
            <person name="Rivero F."/>
            <person name="Bankier A.T."/>
            <person name="Lehmann R."/>
            <person name="Hamlin N."/>
            <person name="Davies R."/>
            <person name="Gaudet P."/>
            <person name="Fey P."/>
            <person name="Pilcher K."/>
            <person name="Chen G."/>
            <person name="Saunders D."/>
            <person name="Sodergren E.J."/>
            <person name="Davis P."/>
            <person name="Kerhornou A."/>
            <person name="Nie X."/>
            <person name="Hall N."/>
            <person name="Anjard C."/>
            <person name="Hemphill L."/>
            <person name="Bason N."/>
            <person name="Farbrother P."/>
            <person name="Desany B."/>
            <person name="Just E."/>
            <person name="Morio T."/>
            <person name="Rost R."/>
            <person name="Churcher C.M."/>
            <person name="Cooper J."/>
            <person name="Haydock S."/>
            <person name="van Driessche N."/>
            <person name="Cronin A."/>
            <person name="Goodhead I."/>
            <person name="Muzny D.M."/>
            <person name="Mourier T."/>
            <person name="Pain A."/>
            <person name="Lu M."/>
            <person name="Harper D."/>
            <person name="Lindsay R."/>
            <person name="Hauser H."/>
            <person name="James K.D."/>
            <person name="Quiles M."/>
            <person name="Madan Babu M."/>
            <person name="Saito T."/>
            <person name="Buchrieser C."/>
            <person name="Wardroper A."/>
            <person name="Felder M."/>
            <person name="Thangavelu M."/>
            <person name="Johnson D."/>
            <person name="Knights A."/>
            <person name="Loulseged H."/>
            <person name="Mungall K.L."/>
            <person name="Oliver K."/>
            <person name="Price C."/>
            <person name="Quail M.A."/>
            <person name="Urushihara H."/>
            <person name="Hernandez J."/>
            <person name="Rabbinowitsch E."/>
            <person name="Steffen D."/>
            <person name="Sanders M."/>
            <person name="Ma J."/>
            <person name="Kohara Y."/>
            <person name="Sharp S."/>
            <person name="Simmonds M.N."/>
            <person name="Spiegler S."/>
            <person name="Tivey A."/>
            <person name="Sugano S."/>
            <person name="White B."/>
            <person name="Walker D."/>
            <person name="Woodward J.R."/>
            <person name="Winckler T."/>
            <person name="Tanaka Y."/>
            <person name="Shaulsky G."/>
            <person name="Schleicher M."/>
            <person name="Weinstock G.M."/>
            <person name="Rosenthal A."/>
            <person name="Cox E.C."/>
            <person name="Chisholm R.L."/>
            <person name="Gibbs R.A."/>
            <person name="Loomis W.F."/>
            <person name="Platzer M."/>
            <person name="Kay R.R."/>
            <person name="Williams J.G."/>
            <person name="Dear P.H."/>
            <person name="Noegel A.A."/>
            <person name="Barrell B.G."/>
            <person name="Kuspa A."/>
        </authorList>
    </citation>
    <scope>NUCLEOTIDE SEQUENCE [LARGE SCALE GENOMIC DNA]</scope>
    <source>
        <strain>AX4</strain>
    </source>
</reference>
<protein>
    <recommendedName>
        <fullName>Signal recognition particle 14 kDa protein</fullName>
        <shortName>SRP14</shortName>
    </recommendedName>
</protein>
<sequence length="123" mass="13893">MLLDNDAFLSALNKLYQTTSKKGTVWVTMKKYVDSDSNFSRKKAERIKESEEEENKCLVRATNGKKKISTIVLAKDKSMFEKNYKNVLLINLDNLKVEKKKPTPTTTPSSSTTAKTAAKKTKV</sequence>
<proteinExistence type="inferred from homology"/>
<accession>Q556L1</accession>
<accession>Q86AM4</accession>
<comment type="function">
    <text evidence="3">Component of the signal recognition particle (SRP) complex, a ribonucleoprotein complex that mediates the cotranslational targeting of secretory and membrane proteins to the endoplasmic reticulum (ER) (By similarity). Srp9 together with srp14 and the Alu portion of the SRP RNA, constitutes the elongation arrest domain of SRP (By similarity). The complex of srp9 and srp14 is required for SRP RNA binding (By similarity).</text>
</comment>
<comment type="subunit">
    <text evidence="2 3">Heterodimer with srp9; binds RNA as heterodimer (By similarity). Component of a signal recognition particle (SRP) complex that consists of a 7SL RNA molecule and six protein subunits: srp72, srp68, srp54, srp19, srp14 and srp9 (By similarity).</text>
</comment>
<comment type="subcellular location">
    <subcellularLocation>
        <location evidence="1">Cytoplasm</location>
    </subcellularLocation>
</comment>
<comment type="similarity">
    <text evidence="5">Belongs to the SRP14 family.</text>
</comment>
<comment type="caution">
    <text evidence="5">The gene for this protein is duplicated in strains AX3 and AX4. These strains contain a duplication of a segment of 750 kb of chromosome 2 compared to the corresponding sequence in strain AX2.</text>
</comment>